<reference key="1">
    <citation type="journal article" date="2002" name="J. Biol. Chem.">
        <title>Purple acid phosphatases of Arabidopsis thaliana. Comparative analysis and differential regulation by phosphate deprivation.</title>
        <authorList>
            <person name="Li D."/>
            <person name="Zhu H."/>
            <person name="Liu K."/>
            <person name="Liu X."/>
            <person name="Leggewie G."/>
            <person name="Udvardi M."/>
            <person name="Wang D."/>
        </authorList>
    </citation>
    <scope>NUCLEOTIDE SEQUENCE [MRNA] (ISOFORMS 1 AND 2)</scope>
    <scope>SUBCELLULAR LOCATION</scope>
    <scope>INDUCTION</scope>
    <scope>GENE FAMILY</scope>
    <scope>NOMENCLATURE</scope>
    <source>
        <strain>cv. Col-1</strain>
    </source>
</reference>
<reference key="2">
    <citation type="journal article" date="1999" name="Nature">
        <title>Sequence and analysis of chromosome 2 of the plant Arabidopsis thaliana.</title>
        <authorList>
            <person name="Lin X."/>
            <person name="Kaul S."/>
            <person name="Rounsley S.D."/>
            <person name="Shea T.P."/>
            <person name="Benito M.-I."/>
            <person name="Town C.D."/>
            <person name="Fujii C.Y."/>
            <person name="Mason T.M."/>
            <person name="Bowman C.L."/>
            <person name="Barnstead M.E."/>
            <person name="Feldblyum T.V."/>
            <person name="Buell C.R."/>
            <person name="Ketchum K.A."/>
            <person name="Lee J.J."/>
            <person name="Ronning C.M."/>
            <person name="Koo H.L."/>
            <person name="Moffat K.S."/>
            <person name="Cronin L.A."/>
            <person name="Shen M."/>
            <person name="Pai G."/>
            <person name="Van Aken S."/>
            <person name="Umayam L."/>
            <person name="Tallon L.J."/>
            <person name="Gill J.E."/>
            <person name="Adams M.D."/>
            <person name="Carrera A.J."/>
            <person name="Creasy T.H."/>
            <person name="Goodman H.M."/>
            <person name="Somerville C.R."/>
            <person name="Copenhaver G.P."/>
            <person name="Preuss D."/>
            <person name="Nierman W.C."/>
            <person name="White O."/>
            <person name="Eisen J.A."/>
            <person name="Salzberg S.L."/>
            <person name="Fraser C.M."/>
            <person name="Venter J.C."/>
        </authorList>
    </citation>
    <scope>NUCLEOTIDE SEQUENCE [LARGE SCALE GENOMIC DNA]</scope>
    <source>
        <strain>cv. Columbia</strain>
    </source>
</reference>
<reference key="3">
    <citation type="journal article" date="2017" name="Plant J.">
        <title>Araport11: a complete reannotation of the Arabidopsis thaliana reference genome.</title>
        <authorList>
            <person name="Cheng C.Y."/>
            <person name="Krishnakumar V."/>
            <person name="Chan A.P."/>
            <person name="Thibaud-Nissen F."/>
            <person name="Schobel S."/>
            <person name="Town C.D."/>
        </authorList>
    </citation>
    <scope>GENOME REANNOTATION</scope>
    <source>
        <strain>cv. Columbia</strain>
    </source>
</reference>
<reference key="4">
    <citation type="journal article" date="2003" name="Science">
        <title>Empirical analysis of transcriptional activity in the Arabidopsis genome.</title>
        <authorList>
            <person name="Yamada K."/>
            <person name="Lim J."/>
            <person name="Dale J.M."/>
            <person name="Chen H."/>
            <person name="Shinn P."/>
            <person name="Palm C.J."/>
            <person name="Southwick A.M."/>
            <person name="Wu H.C."/>
            <person name="Kim C.J."/>
            <person name="Nguyen M."/>
            <person name="Pham P.K."/>
            <person name="Cheuk R.F."/>
            <person name="Karlin-Newmann G."/>
            <person name="Liu S.X."/>
            <person name="Lam B."/>
            <person name="Sakano H."/>
            <person name="Wu T."/>
            <person name="Yu G."/>
            <person name="Miranda M."/>
            <person name="Quach H.L."/>
            <person name="Tripp M."/>
            <person name="Chang C.H."/>
            <person name="Lee J.M."/>
            <person name="Toriumi M.J."/>
            <person name="Chan M.M."/>
            <person name="Tang C.C."/>
            <person name="Onodera C.S."/>
            <person name="Deng J.M."/>
            <person name="Akiyama K."/>
            <person name="Ansari Y."/>
            <person name="Arakawa T."/>
            <person name="Banh J."/>
            <person name="Banno F."/>
            <person name="Bowser L."/>
            <person name="Brooks S.Y."/>
            <person name="Carninci P."/>
            <person name="Chao Q."/>
            <person name="Choy N."/>
            <person name="Enju A."/>
            <person name="Goldsmith A.D."/>
            <person name="Gurjal M."/>
            <person name="Hansen N.F."/>
            <person name="Hayashizaki Y."/>
            <person name="Johnson-Hopson C."/>
            <person name="Hsuan V.W."/>
            <person name="Iida K."/>
            <person name="Karnes M."/>
            <person name="Khan S."/>
            <person name="Koesema E."/>
            <person name="Ishida J."/>
            <person name="Jiang P.X."/>
            <person name="Jones T."/>
            <person name="Kawai J."/>
            <person name="Kamiya A."/>
            <person name="Meyers C."/>
            <person name="Nakajima M."/>
            <person name="Narusaka M."/>
            <person name="Seki M."/>
            <person name="Sakurai T."/>
            <person name="Satou M."/>
            <person name="Tamse R."/>
            <person name="Vaysberg M."/>
            <person name="Wallender E.K."/>
            <person name="Wong C."/>
            <person name="Yamamura Y."/>
            <person name="Yuan S."/>
            <person name="Shinozaki K."/>
            <person name="Davis R.W."/>
            <person name="Theologis A."/>
            <person name="Ecker J.R."/>
        </authorList>
    </citation>
    <scope>NUCLEOTIDE SEQUENCE [LARGE SCALE MRNA] (ISOFORM 1)</scope>
    <source>
        <strain>cv. Columbia</strain>
    </source>
</reference>
<reference key="5">
    <citation type="journal article" date="2005" name="Plant Mol. Biol.">
        <title>Expression patterns of purple acid phosphatase genes in Arabidopsis organs and functional analysis of AtPAP23 predominantly transcribed in flower.</title>
        <authorList>
            <person name="Zhu H."/>
            <person name="Qian W."/>
            <person name="Lu X."/>
            <person name="Li D."/>
            <person name="Liu X."/>
            <person name="Liu K."/>
            <person name="Wang D."/>
        </authorList>
    </citation>
    <scope>TISSUE SPECIFICITY</scope>
</reference>
<sequence>MGRVRKSDFGSIVLVLCCVLNSLLCNGGITSRYVRKLEATVDMPLDSDVFRVPCGYNAPQQVHITQGDVEGKAVIVSWVTQEAKGSNKVIYWKENSTKKHKAHGKTNTYKFYNYTSGFIHHCPIRNLEYDTKYYYVLGVGQTERKFWFFTPPEIGPDVPYTFGLIGDLGQSYDSNITLTHYENNPTKGQAVLFVGDISYADTYPDHDNRRWDSWGRFAERSTAYQPWIWTTGNHELDFAPEIGENRPFKPFTHRYRTPYRSSGSTEPFWYSIKRGPAYIIVLASYSAYGKYTPQYQWLEEEFPKVNRTETPWLIVLMHSPWYNSYDYHYMEGETMRVMYEAWFVKYKVDVVFAGHVHAYERSERVSNIAYNVVNGICTPVKDQSAPVYITIGDGGNIEGLATKMTEPQPKYSAFREASFGHAIFSIKNRTHAHYGWHRNHDGYAVEGDRMWFYNRFWHPVDDSPSCNS</sequence>
<gene>
    <name type="primary">PAP10</name>
    <name type="synonym">AT11</name>
    <name type="ordered locus">At2g16430</name>
    <name type="ORF">F16F14.7</name>
</gene>
<keyword id="KW-0025">Alternative splicing</keyword>
<keyword id="KW-0963">Cytoplasm</keyword>
<keyword id="KW-1015">Disulfide bond</keyword>
<keyword id="KW-0325">Glycoprotein</keyword>
<keyword id="KW-0378">Hydrolase</keyword>
<keyword id="KW-0408">Iron</keyword>
<keyword id="KW-0479">Metal-binding</keyword>
<keyword id="KW-1185">Reference proteome</keyword>
<keyword id="KW-0964">Secreted</keyword>
<keyword id="KW-0732">Signal</keyword>
<keyword id="KW-0862">Zinc</keyword>
<organism>
    <name type="scientific">Arabidopsis thaliana</name>
    <name type="common">Mouse-ear cress</name>
    <dbReference type="NCBI Taxonomy" id="3702"/>
    <lineage>
        <taxon>Eukaryota</taxon>
        <taxon>Viridiplantae</taxon>
        <taxon>Streptophyta</taxon>
        <taxon>Embryophyta</taxon>
        <taxon>Tracheophyta</taxon>
        <taxon>Spermatophyta</taxon>
        <taxon>Magnoliopsida</taxon>
        <taxon>eudicotyledons</taxon>
        <taxon>Gunneridae</taxon>
        <taxon>Pentapetalae</taxon>
        <taxon>rosids</taxon>
        <taxon>malvids</taxon>
        <taxon>Brassicales</taxon>
        <taxon>Brassicaceae</taxon>
        <taxon>Camelineae</taxon>
        <taxon>Arabidopsis</taxon>
    </lineage>
</organism>
<accession>Q9SIV9</accession>
<accession>Q8RX39</accession>
<comment type="catalytic activity">
    <reaction>
        <text>a phosphate monoester + H2O = an alcohol + phosphate</text>
        <dbReference type="Rhea" id="RHEA:15017"/>
        <dbReference type="ChEBI" id="CHEBI:15377"/>
        <dbReference type="ChEBI" id="CHEBI:30879"/>
        <dbReference type="ChEBI" id="CHEBI:43474"/>
        <dbReference type="ChEBI" id="CHEBI:67140"/>
        <dbReference type="EC" id="3.1.3.2"/>
    </reaction>
</comment>
<comment type="cofactor">
    <cofactor evidence="1">
        <name>Fe cation</name>
        <dbReference type="ChEBI" id="CHEBI:24875"/>
    </cofactor>
    <text evidence="1">Binds 1 Fe cation per subunit.</text>
</comment>
<comment type="cofactor">
    <cofactor evidence="1">
        <name>Zn(2+)</name>
        <dbReference type="ChEBI" id="CHEBI:29105"/>
    </cofactor>
    <text evidence="1">Binds 1 zinc ion per subunit.</text>
</comment>
<comment type="subunit">
    <text evidence="1">Homodimer; disulfide-linked.</text>
</comment>
<comment type="subcellular location">
    <molecule>Isoform 1</molecule>
    <subcellularLocation>
        <location evidence="1">Secreted</location>
    </subcellularLocation>
</comment>
<comment type="subcellular location">
    <molecule>Isoform 2</molecule>
    <subcellularLocation>
        <location evidence="6">Cytoplasm</location>
    </subcellularLocation>
</comment>
<comment type="alternative products">
    <event type="alternative splicing"/>
    <isoform>
        <id>Q9SIV9-1</id>
        <name>1</name>
        <sequence type="displayed"/>
    </isoform>
    <isoform>
        <id>Q9SIV9-2</id>
        <name>2</name>
        <sequence type="described" ref="VSP_037192"/>
    </isoform>
</comment>
<comment type="tissue specificity">
    <text evidence="4">Expressed in roots, stems, leaves, flowers and siliques.</text>
</comment>
<comment type="induction">
    <text evidence="3">By phosphate deprivation, mostly isoform 2.</text>
</comment>
<comment type="miscellaneous">
    <molecule>Isoform 2</molecule>
    <text evidence="6">May be due to intron retention.</text>
</comment>
<comment type="similarity">
    <text evidence="6">Belongs to the metallophosphoesterase superfamily. Purple acid phosphatase family.</text>
</comment>
<protein>
    <recommendedName>
        <fullName>Purple acid phosphatase 10</fullName>
        <ecNumber>3.1.3.2</ecNumber>
    </recommendedName>
</protein>
<dbReference type="EC" id="3.1.3.2"/>
<dbReference type="EMBL" id="AF492662">
    <property type="protein sequence ID" value="AAM15911.1"/>
    <property type="molecule type" value="mRNA"/>
</dbReference>
<dbReference type="EMBL" id="AY090893">
    <property type="protein sequence ID" value="AAM16283.1"/>
    <property type="molecule type" value="mRNA"/>
</dbReference>
<dbReference type="EMBL" id="AC007047">
    <property type="protein sequence ID" value="AAD22297.1"/>
    <property type="molecule type" value="Genomic_DNA"/>
</dbReference>
<dbReference type="EMBL" id="CP002685">
    <property type="protein sequence ID" value="AEC06495.1"/>
    <property type="molecule type" value="Genomic_DNA"/>
</dbReference>
<dbReference type="EMBL" id="CP002685">
    <property type="protein sequence ID" value="AEC06496.1"/>
    <property type="molecule type" value="Genomic_DNA"/>
</dbReference>
<dbReference type="EMBL" id="AY093236">
    <property type="protein sequence ID" value="AAM13235.1"/>
    <property type="molecule type" value="mRNA"/>
</dbReference>
<dbReference type="EMBL" id="BT008761">
    <property type="protein sequence ID" value="AAP49523.1"/>
    <property type="molecule type" value="mRNA"/>
</dbReference>
<dbReference type="PIR" id="B84540">
    <property type="entry name" value="B84540"/>
</dbReference>
<dbReference type="RefSeq" id="NP_179235.1">
    <molecule id="Q9SIV9-1"/>
    <property type="nucleotide sequence ID" value="NM_127196.4"/>
</dbReference>
<dbReference type="RefSeq" id="NP_849960.1">
    <molecule id="Q9SIV9-2"/>
    <property type="nucleotide sequence ID" value="NM_179629.2"/>
</dbReference>
<dbReference type="SMR" id="Q9SIV9"/>
<dbReference type="FunCoup" id="Q9SIV9">
    <property type="interactions" value="103"/>
</dbReference>
<dbReference type="STRING" id="3702.Q9SIV9"/>
<dbReference type="GlyCosmos" id="Q9SIV9">
    <property type="glycosylation" value="5 sites, No reported glycans"/>
</dbReference>
<dbReference type="GlyGen" id="Q9SIV9">
    <property type="glycosylation" value="5 sites"/>
</dbReference>
<dbReference type="iPTMnet" id="Q9SIV9"/>
<dbReference type="PaxDb" id="3702-AT2G16430.2"/>
<dbReference type="ProteomicsDB" id="249010">
    <molecule id="Q9SIV9-1"/>
</dbReference>
<dbReference type="EnsemblPlants" id="AT2G16430.1">
    <molecule id="Q9SIV9-2"/>
    <property type="protein sequence ID" value="AT2G16430.1"/>
    <property type="gene ID" value="AT2G16430"/>
</dbReference>
<dbReference type="EnsemblPlants" id="AT2G16430.2">
    <molecule id="Q9SIV9-1"/>
    <property type="protein sequence ID" value="AT2G16430.2"/>
    <property type="gene ID" value="AT2G16430"/>
</dbReference>
<dbReference type="GeneID" id="816141"/>
<dbReference type="Gramene" id="AT2G16430.1">
    <molecule id="Q9SIV9-2"/>
    <property type="protein sequence ID" value="AT2G16430.1"/>
    <property type="gene ID" value="AT2G16430"/>
</dbReference>
<dbReference type="Gramene" id="AT2G16430.2">
    <molecule id="Q9SIV9-1"/>
    <property type="protein sequence ID" value="AT2G16430.2"/>
    <property type="gene ID" value="AT2G16430"/>
</dbReference>
<dbReference type="KEGG" id="ath:AT2G16430"/>
<dbReference type="Araport" id="AT2G16430"/>
<dbReference type="TAIR" id="AT2G16430">
    <property type="gene designation" value="PAP10"/>
</dbReference>
<dbReference type="eggNOG" id="KOG1378">
    <property type="taxonomic scope" value="Eukaryota"/>
</dbReference>
<dbReference type="InParanoid" id="Q9SIV9"/>
<dbReference type="OMA" id="DEPLAYN"/>
<dbReference type="OrthoDB" id="45007at2759"/>
<dbReference type="PhylomeDB" id="Q9SIV9"/>
<dbReference type="BioCyc" id="ARA:AT2G16430-MONOMER"/>
<dbReference type="CD-CODE" id="4299E36E">
    <property type="entry name" value="Nucleolus"/>
</dbReference>
<dbReference type="PRO" id="PR:Q9SIV9"/>
<dbReference type="Proteomes" id="UP000006548">
    <property type="component" value="Chromosome 2"/>
</dbReference>
<dbReference type="ExpressionAtlas" id="Q9SIV9">
    <property type="expression patterns" value="baseline and differential"/>
</dbReference>
<dbReference type="GO" id="GO:0005737">
    <property type="term" value="C:cytoplasm"/>
    <property type="evidence" value="ECO:0007669"/>
    <property type="project" value="UniProtKB-SubCell"/>
</dbReference>
<dbReference type="GO" id="GO:0005576">
    <property type="term" value="C:extracellular region"/>
    <property type="evidence" value="ECO:0007669"/>
    <property type="project" value="UniProtKB-SubCell"/>
</dbReference>
<dbReference type="GO" id="GO:0009505">
    <property type="term" value="C:plant-type cell wall"/>
    <property type="evidence" value="ECO:0007005"/>
    <property type="project" value="TAIR"/>
</dbReference>
<dbReference type="GO" id="GO:0009506">
    <property type="term" value="C:plasmodesma"/>
    <property type="evidence" value="ECO:0007005"/>
    <property type="project" value="TAIR"/>
</dbReference>
<dbReference type="GO" id="GO:0003993">
    <property type="term" value="F:acid phosphatase activity"/>
    <property type="evidence" value="ECO:0000314"/>
    <property type="project" value="TAIR"/>
</dbReference>
<dbReference type="GO" id="GO:0046872">
    <property type="term" value="F:metal ion binding"/>
    <property type="evidence" value="ECO:0007669"/>
    <property type="project" value="UniProtKB-KW"/>
</dbReference>
<dbReference type="GO" id="GO:0016036">
    <property type="term" value="P:cellular response to phosphate starvation"/>
    <property type="evidence" value="ECO:0000315"/>
    <property type="project" value="TAIR"/>
</dbReference>
<dbReference type="CDD" id="cd00839">
    <property type="entry name" value="MPP_PAPs"/>
    <property type="match status" value="1"/>
</dbReference>
<dbReference type="FunFam" id="2.60.40.380:FF:000001">
    <property type="entry name" value="Fe(3+)-Zn(2+) purple acid phosphatase"/>
    <property type="match status" value="1"/>
</dbReference>
<dbReference type="FunFam" id="3.60.21.10:FF:000034">
    <property type="entry name" value="Fe(3+)-Zn(2+) purple acid phosphatase"/>
    <property type="match status" value="1"/>
</dbReference>
<dbReference type="Gene3D" id="3.60.21.10">
    <property type="match status" value="1"/>
</dbReference>
<dbReference type="Gene3D" id="2.60.40.380">
    <property type="entry name" value="Purple acid phosphatase-like, N-terminal"/>
    <property type="match status" value="1"/>
</dbReference>
<dbReference type="InterPro" id="IPR004843">
    <property type="entry name" value="Calcineurin-like_PHP_ApaH"/>
</dbReference>
<dbReference type="InterPro" id="IPR029052">
    <property type="entry name" value="Metallo-depent_PP-like"/>
</dbReference>
<dbReference type="InterPro" id="IPR041792">
    <property type="entry name" value="MPP_PAP"/>
</dbReference>
<dbReference type="InterPro" id="IPR039331">
    <property type="entry name" value="PPA-like"/>
</dbReference>
<dbReference type="InterPro" id="IPR008963">
    <property type="entry name" value="Purple_acid_Pase-like_N"/>
</dbReference>
<dbReference type="InterPro" id="IPR015914">
    <property type="entry name" value="Purple_acid_Pase_N"/>
</dbReference>
<dbReference type="InterPro" id="IPR025733">
    <property type="entry name" value="Purple_acid_PPase_C_dom"/>
</dbReference>
<dbReference type="PANTHER" id="PTHR22953">
    <property type="entry name" value="ACID PHOSPHATASE RELATED"/>
    <property type="match status" value="1"/>
</dbReference>
<dbReference type="PANTHER" id="PTHR22953:SF86">
    <property type="entry name" value="PURPLE ACID PHOSPHATASE 10"/>
    <property type="match status" value="1"/>
</dbReference>
<dbReference type="Pfam" id="PF00149">
    <property type="entry name" value="Metallophos"/>
    <property type="match status" value="1"/>
</dbReference>
<dbReference type="Pfam" id="PF14008">
    <property type="entry name" value="Metallophos_C"/>
    <property type="match status" value="1"/>
</dbReference>
<dbReference type="Pfam" id="PF16656">
    <property type="entry name" value="Pur_ac_phosph_N"/>
    <property type="match status" value="1"/>
</dbReference>
<dbReference type="SUPFAM" id="SSF56300">
    <property type="entry name" value="Metallo-dependent phosphatases"/>
    <property type="match status" value="1"/>
</dbReference>
<dbReference type="SUPFAM" id="SSF49363">
    <property type="entry name" value="Purple acid phosphatase, N-terminal domain"/>
    <property type="match status" value="1"/>
</dbReference>
<name>PPA10_ARATH</name>
<proteinExistence type="evidence at transcript level"/>
<feature type="signal peptide" evidence="2">
    <location>
        <begin position="1"/>
        <end position="25"/>
    </location>
</feature>
<feature type="chain" id="PRO_0000372815" description="Purple acid phosphatase 10">
    <location>
        <begin position="26"/>
        <end position="468"/>
    </location>
</feature>
<feature type="active site" description="Proton donor" evidence="1">
    <location>
        <position position="328"/>
    </location>
</feature>
<feature type="binding site" evidence="1">
    <location>
        <position position="167"/>
    </location>
    <ligand>
        <name>Fe cation</name>
        <dbReference type="ChEBI" id="CHEBI:24875"/>
    </ligand>
</feature>
<feature type="binding site" evidence="1">
    <location>
        <position position="196"/>
    </location>
    <ligand>
        <name>Fe cation</name>
        <dbReference type="ChEBI" id="CHEBI:24875"/>
    </ligand>
</feature>
<feature type="binding site" evidence="1">
    <location>
        <position position="196"/>
    </location>
    <ligand>
        <name>Zn(2+)</name>
        <dbReference type="ChEBI" id="CHEBI:29105"/>
    </ligand>
</feature>
<feature type="binding site" evidence="1">
    <location>
        <position position="199"/>
    </location>
    <ligand>
        <name>Fe cation</name>
        <dbReference type="ChEBI" id="CHEBI:24875"/>
    </ligand>
</feature>
<feature type="binding site" evidence="1">
    <location>
        <position position="233"/>
    </location>
    <ligand>
        <name>substrate</name>
    </ligand>
</feature>
<feature type="binding site" evidence="1">
    <location>
        <position position="233"/>
    </location>
    <ligand>
        <name>Zn(2+)</name>
        <dbReference type="ChEBI" id="CHEBI:29105"/>
    </ligand>
</feature>
<feature type="binding site" evidence="1">
    <location>
        <position position="318"/>
    </location>
    <ligand>
        <name>Zn(2+)</name>
        <dbReference type="ChEBI" id="CHEBI:29105"/>
    </ligand>
</feature>
<feature type="binding site" evidence="1">
    <location>
        <begin position="355"/>
        <end position="357"/>
    </location>
    <ligand>
        <name>substrate</name>
    </ligand>
</feature>
<feature type="binding site" evidence="1">
    <location>
        <position position="355"/>
    </location>
    <ligand>
        <name>Zn(2+)</name>
        <dbReference type="ChEBI" id="CHEBI:29105"/>
    </ligand>
</feature>
<feature type="binding site" evidence="1">
    <location>
        <position position="357"/>
    </location>
    <ligand>
        <name>Fe cation</name>
        <dbReference type="ChEBI" id="CHEBI:24875"/>
    </ligand>
</feature>
<feature type="glycosylation site" description="N-linked (GlcNAc...) asparagine" evidence="2">
    <location>
        <position position="95"/>
    </location>
</feature>
<feature type="glycosylation site" description="N-linked (GlcNAc...) asparagine" evidence="2">
    <location>
        <position position="113"/>
    </location>
</feature>
<feature type="glycosylation site" description="N-linked (GlcNAc...) asparagine" evidence="2">
    <location>
        <position position="175"/>
    </location>
</feature>
<feature type="glycosylation site" description="N-linked (GlcNAc...) asparagine" evidence="2">
    <location>
        <position position="306"/>
    </location>
</feature>
<feature type="glycosylation site" description="N-linked (GlcNAc...) asparagine" evidence="2">
    <location>
        <position position="428"/>
    </location>
</feature>
<feature type="disulfide bond" description="Interchain" evidence="1">
    <location>
        <position position="377"/>
    </location>
</feature>
<feature type="splice variant" id="VSP_037192" description="In isoform 2." evidence="5">
    <original>MGRVRKSDFGSIVLVLCCVLNSLLCNGGITSRYVRKLEATVDMPLDSDVFRVPCGYNAPQQVHITQGDVEGKAVIVSWVTQEAKGSNKVIYWKENSTKKHKAHGKTNTYKFYNYTSGFIHHCPIRNLE</original>
    <variation>MLWFFLLQ</variation>
    <location>
        <begin position="1"/>
        <end position="128"/>
    </location>
</feature>
<feature type="sequence conflict" description="In Ref. 1; AAM16283." evidence="6" ref="1">
    <original>D</original>
    <variation>N</variation>
    <location>
        <position position="167"/>
    </location>
</feature>
<feature type="sequence conflict" description="In Ref. 1; AAM16283." evidence="6" ref="1">
    <original>I</original>
    <variation>V</variation>
    <location>
        <position position="280"/>
    </location>
</feature>
<feature type="sequence conflict" description="In Ref. 1; AAM16283." evidence="6" ref="1">
    <original>D</original>
    <variation>G</variation>
    <location>
        <position position="441"/>
    </location>
</feature>
<evidence type="ECO:0000250" key="1"/>
<evidence type="ECO:0000255" key="2"/>
<evidence type="ECO:0000269" key="3">
    <source>
    </source>
</evidence>
<evidence type="ECO:0000269" key="4">
    <source>
    </source>
</evidence>
<evidence type="ECO:0000303" key="5">
    <source>
    </source>
</evidence>
<evidence type="ECO:0000305" key="6"/>